<gene>
    <name evidence="1" type="primary">rplX</name>
    <name type="ordered locus">LMOf2365_2594</name>
</gene>
<feature type="chain" id="PRO_0000130672" description="Large ribosomal subunit protein uL24">
    <location>
        <begin position="1"/>
        <end position="103"/>
    </location>
</feature>
<keyword id="KW-0687">Ribonucleoprotein</keyword>
<keyword id="KW-0689">Ribosomal protein</keyword>
<keyword id="KW-0694">RNA-binding</keyword>
<keyword id="KW-0699">rRNA-binding</keyword>
<proteinExistence type="inferred from homology"/>
<comment type="function">
    <text evidence="1">One of two assembly initiator proteins, it binds directly to the 5'-end of the 23S rRNA, where it nucleates assembly of the 50S subunit.</text>
</comment>
<comment type="function">
    <text evidence="1">One of the proteins that surrounds the polypeptide exit tunnel on the outside of the subunit.</text>
</comment>
<comment type="subunit">
    <text evidence="1">Part of the 50S ribosomal subunit.</text>
</comment>
<comment type="similarity">
    <text evidence="1">Belongs to the universal ribosomal protein uL24 family.</text>
</comment>
<accession>Q71WF7</accession>
<organism>
    <name type="scientific">Listeria monocytogenes serotype 4b (strain F2365)</name>
    <dbReference type="NCBI Taxonomy" id="265669"/>
    <lineage>
        <taxon>Bacteria</taxon>
        <taxon>Bacillati</taxon>
        <taxon>Bacillota</taxon>
        <taxon>Bacilli</taxon>
        <taxon>Bacillales</taxon>
        <taxon>Listeriaceae</taxon>
        <taxon>Listeria</taxon>
    </lineage>
</organism>
<dbReference type="EMBL" id="AE017262">
    <property type="protein sequence ID" value="AAT05359.1"/>
    <property type="molecule type" value="Genomic_DNA"/>
</dbReference>
<dbReference type="RefSeq" id="WP_003720939.1">
    <property type="nucleotide sequence ID" value="NC_002973.6"/>
</dbReference>
<dbReference type="SMR" id="Q71WF7"/>
<dbReference type="GeneID" id="93236043"/>
<dbReference type="KEGG" id="lmf:LMOf2365_2594"/>
<dbReference type="HOGENOM" id="CLU_093315_2_0_9"/>
<dbReference type="GO" id="GO:1990904">
    <property type="term" value="C:ribonucleoprotein complex"/>
    <property type="evidence" value="ECO:0007669"/>
    <property type="project" value="UniProtKB-KW"/>
</dbReference>
<dbReference type="GO" id="GO:0005840">
    <property type="term" value="C:ribosome"/>
    <property type="evidence" value="ECO:0007669"/>
    <property type="project" value="UniProtKB-KW"/>
</dbReference>
<dbReference type="GO" id="GO:0019843">
    <property type="term" value="F:rRNA binding"/>
    <property type="evidence" value="ECO:0007669"/>
    <property type="project" value="UniProtKB-UniRule"/>
</dbReference>
<dbReference type="GO" id="GO:0003735">
    <property type="term" value="F:structural constituent of ribosome"/>
    <property type="evidence" value="ECO:0007669"/>
    <property type="project" value="InterPro"/>
</dbReference>
<dbReference type="GO" id="GO:0006412">
    <property type="term" value="P:translation"/>
    <property type="evidence" value="ECO:0007669"/>
    <property type="project" value="UniProtKB-UniRule"/>
</dbReference>
<dbReference type="CDD" id="cd06089">
    <property type="entry name" value="KOW_RPL26"/>
    <property type="match status" value="1"/>
</dbReference>
<dbReference type="FunFam" id="2.30.30.30:FF:000004">
    <property type="entry name" value="50S ribosomal protein L24"/>
    <property type="match status" value="1"/>
</dbReference>
<dbReference type="Gene3D" id="2.30.30.30">
    <property type="match status" value="1"/>
</dbReference>
<dbReference type="HAMAP" id="MF_01326_B">
    <property type="entry name" value="Ribosomal_uL24_B"/>
    <property type="match status" value="1"/>
</dbReference>
<dbReference type="InterPro" id="IPR005824">
    <property type="entry name" value="KOW"/>
</dbReference>
<dbReference type="InterPro" id="IPR014722">
    <property type="entry name" value="Rib_uL2_dom2"/>
</dbReference>
<dbReference type="InterPro" id="IPR003256">
    <property type="entry name" value="Ribosomal_uL24"/>
</dbReference>
<dbReference type="InterPro" id="IPR005825">
    <property type="entry name" value="Ribosomal_uL24_CS"/>
</dbReference>
<dbReference type="InterPro" id="IPR041988">
    <property type="entry name" value="Ribosomal_uL24_KOW"/>
</dbReference>
<dbReference type="InterPro" id="IPR008991">
    <property type="entry name" value="Translation_prot_SH3-like_sf"/>
</dbReference>
<dbReference type="NCBIfam" id="TIGR01079">
    <property type="entry name" value="rplX_bact"/>
    <property type="match status" value="1"/>
</dbReference>
<dbReference type="PANTHER" id="PTHR12903">
    <property type="entry name" value="MITOCHONDRIAL RIBOSOMAL PROTEIN L24"/>
    <property type="match status" value="1"/>
</dbReference>
<dbReference type="Pfam" id="PF00467">
    <property type="entry name" value="KOW"/>
    <property type="match status" value="1"/>
</dbReference>
<dbReference type="Pfam" id="PF17136">
    <property type="entry name" value="ribosomal_L24"/>
    <property type="match status" value="1"/>
</dbReference>
<dbReference type="SMART" id="SM00739">
    <property type="entry name" value="KOW"/>
    <property type="match status" value="1"/>
</dbReference>
<dbReference type="SUPFAM" id="SSF50104">
    <property type="entry name" value="Translation proteins SH3-like domain"/>
    <property type="match status" value="1"/>
</dbReference>
<dbReference type="PROSITE" id="PS01108">
    <property type="entry name" value="RIBOSOMAL_L24"/>
    <property type="match status" value="1"/>
</dbReference>
<sequence>MHVKKGDKVKVITGKDKGKSGKVLAAFPKKDRVLIEGINMVKKHTKPSNINPQGGILNVEAPIHVSNVMLIDPKTGEPTRVGYEVKGDKKVRVAKKSGEVIDK</sequence>
<reference key="1">
    <citation type="journal article" date="2004" name="Nucleic Acids Res.">
        <title>Whole genome comparisons of serotype 4b and 1/2a strains of the food-borne pathogen Listeria monocytogenes reveal new insights into the core genome components of this species.</title>
        <authorList>
            <person name="Nelson K.E."/>
            <person name="Fouts D.E."/>
            <person name="Mongodin E.F."/>
            <person name="Ravel J."/>
            <person name="DeBoy R.T."/>
            <person name="Kolonay J.F."/>
            <person name="Rasko D.A."/>
            <person name="Angiuoli S.V."/>
            <person name="Gill S.R."/>
            <person name="Paulsen I.T."/>
            <person name="Peterson J.D."/>
            <person name="White O."/>
            <person name="Nelson W.C."/>
            <person name="Nierman W.C."/>
            <person name="Beanan M.J."/>
            <person name="Brinkac L.M."/>
            <person name="Daugherty S.C."/>
            <person name="Dodson R.J."/>
            <person name="Durkin A.S."/>
            <person name="Madupu R."/>
            <person name="Haft D.H."/>
            <person name="Selengut J."/>
            <person name="Van Aken S.E."/>
            <person name="Khouri H.M."/>
            <person name="Fedorova N."/>
            <person name="Forberger H.A."/>
            <person name="Tran B."/>
            <person name="Kathariou S."/>
            <person name="Wonderling L.D."/>
            <person name="Uhlich G.A."/>
            <person name="Bayles D.O."/>
            <person name="Luchansky J.B."/>
            <person name="Fraser C.M."/>
        </authorList>
    </citation>
    <scope>NUCLEOTIDE SEQUENCE [LARGE SCALE GENOMIC DNA]</scope>
    <source>
        <strain>F2365</strain>
    </source>
</reference>
<evidence type="ECO:0000255" key="1">
    <source>
        <dbReference type="HAMAP-Rule" id="MF_01326"/>
    </source>
</evidence>
<evidence type="ECO:0000305" key="2"/>
<name>RL24_LISMF</name>
<protein>
    <recommendedName>
        <fullName evidence="1">Large ribosomal subunit protein uL24</fullName>
    </recommendedName>
    <alternativeName>
        <fullName evidence="2">50S ribosomal protein L24</fullName>
    </alternativeName>
</protein>